<sequence length="354" mass="40212">MQLIKCLVIIQLSLLLVEESFAGRDFYKILNVKKNANTNEVKKAYRRLAKELHPDKNKDDPDASTKFQDLGAAYEVLSNPDKRKTYDRCGEECLKKEGMMDHGGDPFSSFFGDFGFHFGGDGQQQDAPRGADIVMDLYVSLEELYSGNFVEIVRNKPVTKPASGTRKCNCRQEMVTRNLGPGRFQMIQQTVCDECPNVKLVNEERTLEIEVEQGMVDGQETRFVAEGEPHIDGEPGDLIVRVQQMPHPRFLRKNDDLYTNVTISLQDALVGFSMEIKHLDGHLVPVTREKVTWPGARIRKKGEGMPNFENNNLTGNLYITFDVEFPKKDLTEEDKEALKKILDQSSINRIYNGL</sequence>
<gene>
    <name evidence="9" type="primary">shv</name>
    <name evidence="7" type="ORF">CG4164</name>
</gene>
<evidence type="ECO:0000255" key="1"/>
<evidence type="ECO:0000255" key="2">
    <source>
        <dbReference type="PROSITE-ProRule" id="PRU00286"/>
    </source>
</evidence>
<evidence type="ECO:0000255" key="3">
    <source>
        <dbReference type="PROSITE-ProRule" id="PRU00498"/>
    </source>
</evidence>
<evidence type="ECO:0000269" key="4">
    <source>
    </source>
</evidence>
<evidence type="ECO:0000303" key="5">
    <source>
    </source>
</evidence>
<evidence type="ECO:0000305" key="6"/>
<evidence type="ECO:0000312" key="7">
    <source>
        <dbReference type="EMBL" id="AAF51493.1"/>
    </source>
</evidence>
<evidence type="ECO:0000312" key="8">
    <source>
        <dbReference type="EMBL" id="AAK93202.1"/>
    </source>
</evidence>
<evidence type="ECO:0000312" key="9">
    <source>
        <dbReference type="FlyBase" id="FBgn0031256"/>
    </source>
</evidence>
<evidence type="ECO:0000312" key="10">
    <source>
        <dbReference type="Proteomes" id="UP000000803"/>
    </source>
</evidence>
<dbReference type="EMBL" id="AE014134">
    <property type="protein sequence ID" value="AAF51493.1"/>
    <property type="molecule type" value="Genomic_DNA"/>
</dbReference>
<dbReference type="EMBL" id="AY051778">
    <property type="protein sequence ID" value="AAK93202.1"/>
    <property type="molecule type" value="mRNA"/>
</dbReference>
<dbReference type="RefSeq" id="NP_608525.1">
    <property type="nucleotide sequence ID" value="NM_134681.3"/>
</dbReference>
<dbReference type="SMR" id="Q9VPQ2"/>
<dbReference type="FunCoup" id="Q9VPQ2">
    <property type="interactions" value="1666"/>
</dbReference>
<dbReference type="IntAct" id="Q9VPQ2">
    <property type="interactions" value="5"/>
</dbReference>
<dbReference type="STRING" id="7227.FBpp0077720"/>
<dbReference type="GlyCosmos" id="Q9VPQ2">
    <property type="glycosylation" value="2 sites, No reported glycans"/>
</dbReference>
<dbReference type="GlyGen" id="Q9VPQ2">
    <property type="glycosylation" value="2 sites"/>
</dbReference>
<dbReference type="PaxDb" id="7227-FBpp0077720"/>
<dbReference type="DNASU" id="33220"/>
<dbReference type="EnsemblMetazoa" id="FBtr0078060">
    <property type="protein sequence ID" value="FBpp0077720"/>
    <property type="gene ID" value="FBgn0031256"/>
</dbReference>
<dbReference type="GeneID" id="33220"/>
<dbReference type="KEGG" id="dme:Dmel_CG4164"/>
<dbReference type="UCSC" id="CG4164-RA">
    <property type="organism name" value="d. melanogaster"/>
</dbReference>
<dbReference type="AGR" id="FB:FBgn0031256"/>
<dbReference type="CTD" id="33220"/>
<dbReference type="FlyBase" id="FBgn0031256">
    <property type="gene designation" value="shv"/>
</dbReference>
<dbReference type="VEuPathDB" id="VectorBase:FBgn0031256"/>
<dbReference type="eggNOG" id="KOG0713">
    <property type="taxonomic scope" value="Eukaryota"/>
</dbReference>
<dbReference type="GeneTree" id="ENSGT00940000155792"/>
<dbReference type="HOGENOM" id="CLU_017633_0_0_1"/>
<dbReference type="InParanoid" id="Q9VPQ2"/>
<dbReference type="OMA" id="FAGRDFY"/>
<dbReference type="OrthoDB" id="550424at2759"/>
<dbReference type="PhylomeDB" id="Q9VPQ2"/>
<dbReference type="SignaLink" id="Q9VPQ2"/>
<dbReference type="BioGRID-ORCS" id="33220">
    <property type="hits" value="0 hits in 1 CRISPR screen"/>
</dbReference>
<dbReference type="GenomeRNAi" id="33220"/>
<dbReference type="PRO" id="PR:Q9VPQ2"/>
<dbReference type="Proteomes" id="UP000000803">
    <property type="component" value="Chromosome 2L"/>
</dbReference>
<dbReference type="Bgee" id="FBgn0031256">
    <property type="expression patterns" value="Expressed in saliva-secreting gland and 57 other cell types or tissues"/>
</dbReference>
<dbReference type="GO" id="GO:0005783">
    <property type="term" value="C:endoplasmic reticulum"/>
    <property type="evidence" value="ECO:0000318"/>
    <property type="project" value="GO_Central"/>
</dbReference>
<dbReference type="GO" id="GO:0005615">
    <property type="term" value="C:extracellular space"/>
    <property type="evidence" value="ECO:0000314"/>
    <property type="project" value="FlyBase"/>
</dbReference>
<dbReference type="GO" id="GO:0031594">
    <property type="term" value="C:neuromuscular junction"/>
    <property type="evidence" value="ECO:0000314"/>
    <property type="project" value="FlyBase"/>
</dbReference>
<dbReference type="GO" id="GO:0005634">
    <property type="term" value="C:nucleus"/>
    <property type="evidence" value="ECO:0007669"/>
    <property type="project" value="UniProtKB-SubCell"/>
</dbReference>
<dbReference type="GO" id="GO:0005886">
    <property type="term" value="C:plasma membrane"/>
    <property type="evidence" value="ECO:0007669"/>
    <property type="project" value="UniProtKB-SubCell"/>
</dbReference>
<dbReference type="GO" id="GO:0005178">
    <property type="term" value="F:integrin binding"/>
    <property type="evidence" value="ECO:0000353"/>
    <property type="project" value="FlyBase"/>
</dbReference>
<dbReference type="GO" id="GO:0051787">
    <property type="term" value="F:misfolded protein binding"/>
    <property type="evidence" value="ECO:0000318"/>
    <property type="project" value="GO_Central"/>
</dbReference>
<dbReference type="GO" id="GO:0051082">
    <property type="term" value="F:unfolded protein binding"/>
    <property type="evidence" value="ECO:0000318"/>
    <property type="project" value="GO_Central"/>
</dbReference>
<dbReference type="GO" id="GO:0007155">
    <property type="term" value="P:cell adhesion"/>
    <property type="evidence" value="ECO:0007669"/>
    <property type="project" value="UniProtKB-KW"/>
</dbReference>
<dbReference type="GO" id="GO:0060250">
    <property type="term" value="P:germ-line stem-cell niche homeostasis"/>
    <property type="evidence" value="ECO:0000315"/>
    <property type="project" value="FlyBase"/>
</dbReference>
<dbReference type="GO" id="GO:0036098">
    <property type="term" value="P:male germ-line stem cell population maintenance"/>
    <property type="evidence" value="ECO:0000315"/>
    <property type="project" value="FlyBase"/>
</dbReference>
<dbReference type="GO" id="GO:2001046">
    <property type="term" value="P:positive regulation of integrin-mediated signaling pathway"/>
    <property type="evidence" value="ECO:0000315"/>
    <property type="project" value="FlyBase"/>
</dbReference>
<dbReference type="GO" id="GO:0090129">
    <property type="term" value="P:positive regulation of synapse maturation"/>
    <property type="evidence" value="ECO:0000315"/>
    <property type="project" value="FlyBase"/>
</dbReference>
<dbReference type="GO" id="GO:0006457">
    <property type="term" value="P:protein folding"/>
    <property type="evidence" value="ECO:0007669"/>
    <property type="project" value="InterPro"/>
</dbReference>
<dbReference type="GO" id="GO:0051604">
    <property type="term" value="P:protein maturation"/>
    <property type="evidence" value="ECO:0000318"/>
    <property type="project" value="GO_Central"/>
</dbReference>
<dbReference type="CDD" id="cd06257">
    <property type="entry name" value="DnaJ"/>
    <property type="match status" value="1"/>
</dbReference>
<dbReference type="CDD" id="cd10747">
    <property type="entry name" value="DnaJ_C"/>
    <property type="match status" value="1"/>
</dbReference>
<dbReference type="FunFam" id="1.10.287.110:FF:000040">
    <property type="entry name" value="dnaJ homolog subfamily B member 11"/>
    <property type="match status" value="1"/>
</dbReference>
<dbReference type="FunFam" id="2.60.260.20:FF:000013">
    <property type="entry name" value="DnaJ subfamily B member 11"/>
    <property type="match status" value="1"/>
</dbReference>
<dbReference type="Gene3D" id="1.10.287.110">
    <property type="entry name" value="DnaJ domain"/>
    <property type="match status" value="1"/>
</dbReference>
<dbReference type="Gene3D" id="2.60.260.20">
    <property type="entry name" value="Urease metallochaperone UreE, N-terminal domain"/>
    <property type="match status" value="2"/>
</dbReference>
<dbReference type="InterPro" id="IPR051736">
    <property type="entry name" value="DnaJ-B11-like"/>
</dbReference>
<dbReference type="InterPro" id="IPR002939">
    <property type="entry name" value="DnaJ_C"/>
</dbReference>
<dbReference type="InterPro" id="IPR001623">
    <property type="entry name" value="DnaJ_domain"/>
</dbReference>
<dbReference type="InterPro" id="IPR018253">
    <property type="entry name" value="DnaJ_domain_CS"/>
</dbReference>
<dbReference type="InterPro" id="IPR008971">
    <property type="entry name" value="HSP40/DnaJ_pept-bd"/>
</dbReference>
<dbReference type="InterPro" id="IPR036869">
    <property type="entry name" value="J_dom_sf"/>
</dbReference>
<dbReference type="PANTHER" id="PTHR44298">
    <property type="entry name" value="DNAJ HOMOLOG SUBFAMILY B MEMBER 11"/>
    <property type="match status" value="1"/>
</dbReference>
<dbReference type="PANTHER" id="PTHR44298:SF1">
    <property type="entry name" value="DNAJ HOMOLOG SUBFAMILY B MEMBER 11"/>
    <property type="match status" value="1"/>
</dbReference>
<dbReference type="Pfam" id="PF00226">
    <property type="entry name" value="DnaJ"/>
    <property type="match status" value="1"/>
</dbReference>
<dbReference type="Pfam" id="PF01556">
    <property type="entry name" value="DnaJ_C"/>
    <property type="match status" value="1"/>
</dbReference>
<dbReference type="PRINTS" id="PR00625">
    <property type="entry name" value="JDOMAIN"/>
</dbReference>
<dbReference type="SMART" id="SM00271">
    <property type="entry name" value="DnaJ"/>
    <property type="match status" value="1"/>
</dbReference>
<dbReference type="SUPFAM" id="SSF46565">
    <property type="entry name" value="Chaperone J-domain"/>
    <property type="match status" value="1"/>
</dbReference>
<dbReference type="SUPFAM" id="SSF49493">
    <property type="entry name" value="HSP40/DnaJ peptide-binding domain"/>
    <property type="match status" value="2"/>
</dbReference>
<dbReference type="PROSITE" id="PS00636">
    <property type="entry name" value="DNAJ_1"/>
    <property type="match status" value="1"/>
</dbReference>
<dbReference type="PROSITE" id="PS50076">
    <property type="entry name" value="DNAJ_2"/>
    <property type="match status" value="1"/>
</dbReference>
<organism evidence="10">
    <name type="scientific">Drosophila melanogaster</name>
    <name type="common">Fruit fly</name>
    <dbReference type="NCBI Taxonomy" id="7227"/>
    <lineage>
        <taxon>Eukaryota</taxon>
        <taxon>Metazoa</taxon>
        <taxon>Ecdysozoa</taxon>
        <taxon>Arthropoda</taxon>
        <taxon>Hexapoda</taxon>
        <taxon>Insecta</taxon>
        <taxon>Pterygota</taxon>
        <taxon>Neoptera</taxon>
        <taxon>Endopterygota</taxon>
        <taxon>Diptera</taxon>
        <taxon>Brachycera</taxon>
        <taxon>Muscomorpha</taxon>
        <taxon>Ephydroidea</taxon>
        <taxon>Drosophilidae</taxon>
        <taxon>Drosophila</taxon>
        <taxon>Sophophora</taxon>
    </lineage>
</organism>
<reference evidence="10" key="1">
    <citation type="journal article" date="2000" name="Science">
        <title>The genome sequence of Drosophila melanogaster.</title>
        <authorList>
            <person name="Adams M.D."/>
            <person name="Celniker S.E."/>
            <person name="Holt R.A."/>
            <person name="Evans C.A."/>
            <person name="Gocayne J.D."/>
            <person name="Amanatides P.G."/>
            <person name="Scherer S.E."/>
            <person name="Li P.W."/>
            <person name="Hoskins R.A."/>
            <person name="Galle R.F."/>
            <person name="George R.A."/>
            <person name="Lewis S.E."/>
            <person name="Richards S."/>
            <person name="Ashburner M."/>
            <person name="Henderson S.N."/>
            <person name="Sutton G.G."/>
            <person name="Wortman J.R."/>
            <person name="Yandell M.D."/>
            <person name="Zhang Q."/>
            <person name="Chen L.X."/>
            <person name="Brandon R.C."/>
            <person name="Rogers Y.-H.C."/>
            <person name="Blazej R.G."/>
            <person name="Champe M."/>
            <person name="Pfeiffer B.D."/>
            <person name="Wan K.H."/>
            <person name="Doyle C."/>
            <person name="Baxter E.G."/>
            <person name="Helt G."/>
            <person name="Nelson C.R."/>
            <person name="Miklos G.L.G."/>
            <person name="Abril J.F."/>
            <person name="Agbayani A."/>
            <person name="An H.-J."/>
            <person name="Andrews-Pfannkoch C."/>
            <person name="Baldwin D."/>
            <person name="Ballew R.M."/>
            <person name="Basu A."/>
            <person name="Baxendale J."/>
            <person name="Bayraktaroglu L."/>
            <person name="Beasley E.M."/>
            <person name="Beeson K.Y."/>
            <person name="Benos P.V."/>
            <person name="Berman B.P."/>
            <person name="Bhandari D."/>
            <person name="Bolshakov S."/>
            <person name="Borkova D."/>
            <person name="Botchan M.R."/>
            <person name="Bouck J."/>
            <person name="Brokstein P."/>
            <person name="Brottier P."/>
            <person name="Burtis K.C."/>
            <person name="Busam D.A."/>
            <person name="Butler H."/>
            <person name="Cadieu E."/>
            <person name="Center A."/>
            <person name="Chandra I."/>
            <person name="Cherry J.M."/>
            <person name="Cawley S."/>
            <person name="Dahlke C."/>
            <person name="Davenport L.B."/>
            <person name="Davies P."/>
            <person name="de Pablos B."/>
            <person name="Delcher A."/>
            <person name="Deng Z."/>
            <person name="Mays A.D."/>
            <person name="Dew I."/>
            <person name="Dietz S.M."/>
            <person name="Dodson K."/>
            <person name="Doup L.E."/>
            <person name="Downes M."/>
            <person name="Dugan-Rocha S."/>
            <person name="Dunkov B.C."/>
            <person name="Dunn P."/>
            <person name="Durbin K.J."/>
            <person name="Evangelista C.C."/>
            <person name="Ferraz C."/>
            <person name="Ferriera S."/>
            <person name="Fleischmann W."/>
            <person name="Fosler C."/>
            <person name="Gabrielian A.E."/>
            <person name="Garg N.S."/>
            <person name="Gelbart W.M."/>
            <person name="Glasser K."/>
            <person name="Glodek A."/>
            <person name="Gong F."/>
            <person name="Gorrell J.H."/>
            <person name="Gu Z."/>
            <person name="Guan P."/>
            <person name="Harris M."/>
            <person name="Harris N.L."/>
            <person name="Harvey D.A."/>
            <person name="Heiman T.J."/>
            <person name="Hernandez J.R."/>
            <person name="Houck J."/>
            <person name="Hostin D."/>
            <person name="Houston K.A."/>
            <person name="Howland T.J."/>
            <person name="Wei M.-H."/>
            <person name="Ibegwam C."/>
            <person name="Jalali M."/>
            <person name="Kalush F."/>
            <person name="Karpen G.H."/>
            <person name="Ke Z."/>
            <person name="Kennison J.A."/>
            <person name="Ketchum K.A."/>
            <person name="Kimmel B.E."/>
            <person name="Kodira C.D."/>
            <person name="Kraft C.L."/>
            <person name="Kravitz S."/>
            <person name="Kulp D."/>
            <person name="Lai Z."/>
            <person name="Lasko P."/>
            <person name="Lei Y."/>
            <person name="Levitsky A.A."/>
            <person name="Li J.H."/>
            <person name="Li Z."/>
            <person name="Liang Y."/>
            <person name="Lin X."/>
            <person name="Liu X."/>
            <person name="Mattei B."/>
            <person name="McIntosh T.C."/>
            <person name="McLeod M.P."/>
            <person name="McPherson D."/>
            <person name="Merkulov G."/>
            <person name="Milshina N.V."/>
            <person name="Mobarry C."/>
            <person name="Morris J."/>
            <person name="Moshrefi A."/>
            <person name="Mount S.M."/>
            <person name="Moy M."/>
            <person name="Murphy B."/>
            <person name="Murphy L."/>
            <person name="Muzny D.M."/>
            <person name="Nelson D.L."/>
            <person name="Nelson D.R."/>
            <person name="Nelson K.A."/>
            <person name="Nixon K."/>
            <person name="Nusskern D.R."/>
            <person name="Pacleb J.M."/>
            <person name="Palazzolo M."/>
            <person name="Pittman G.S."/>
            <person name="Pan S."/>
            <person name="Pollard J."/>
            <person name="Puri V."/>
            <person name="Reese M.G."/>
            <person name="Reinert K."/>
            <person name="Remington K."/>
            <person name="Saunders R.D.C."/>
            <person name="Scheeler F."/>
            <person name="Shen H."/>
            <person name="Shue B.C."/>
            <person name="Siden-Kiamos I."/>
            <person name="Simpson M."/>
            <person name="Skupski M.P."/>
            <person name="Smith T.J."/>
            <person name="Spier E."/>
            <person name="Spradling A.C."/>
            <person name="Stapleton M."/>
            <person name="Strong R."/>
            <person name="Sun E."/>
            <person name="Svirskas R."/>
            <person name="Tector C."/>
            <person name="Turner R."/>
            <person name="Venter E."/>
            <person name="Wang A.H."/>
            <person name="Wang X."/>
            <person name="Wang Z.-Y."/>
            <person name="Wassarman D.A."/>
            <person name="Weinstock G.M."/>
            <person name="Weissenbach J."/>
            <person name="Williams S.M."/>
            <person name="Woodage T."/>
            <person name="Worley K.C."/>
            <person name="Wu D."/>
            <person name="Yang S."/>
            <person name="Yao Q.A."/>
            <person name="Ye J."/>
            <person name="Yeh R.-F."/>
            <person name="Zaveri J.S."/>
            <person name="Zhan M."/>
            <person name="Zhang G."/>
            <person name="Zhao Q."/>
            <person name="Zheng L."/>
            <person name="Zheng X.H."/>
            <person name="Zhong F.N."/>
            <person name="Zhong W."/>
            <person name="Zhou X."/>
            <person name="Zhu S.C."/>
            <person name="Zhu X."/>
            <person name="Smith H.O."/>
            <person name="Gibbs R.A."/>
            <person name="Myers E.W."/>
            <person name="Rubin G.M."/>
            <person name="Venter J.C."/>
        </authorList>
    </citation>
    <scope>NUCLEOTIDE SEQUENCE [LARGE SCALE GENOMIC DNA]</scope>
    <source>
        <strain evidence="10">Berkeley</strain>
    </source>
</reference>
<reference evidence="10" key="2">
    <citation type="journal article" date="2002" name="Genome Biol.">
        <title>Annotation of the Drosophila melanogaster euchromatic genome: a systematic review.</title>
        <authorList>
            <person name="Misra S."/>
            <person name="Crosby M.A."/>
            <person name="Mungall C.J."/>
            <person name="Matthews B.B."/>
            <person name="Campbell K.S."/>
            <person name="Hradecky P."/>
            <person name="Huang Y."/>
            <person name="Kaminker J.S."/>
            <person name="Millburn G.H."/>
            <person name="Prochnik S.E."/>
            <person name="Smith C.D."/>
            <person name="Tupy J.L."/>
            <person name="Whitfield E.J."/>
            <person name="Bayraktaroglu L."/>
            <person name="Berman B.P."/>
            <person name="Bettencourt B.R."/>
            <person name="Celniker S.E."/>
            <person name="de Grey A.D.N.J."/>
            <person name="Drysdale R.A."/>
            <person name="Harris N.L."/>
            <person name="Richter J."/>
            <person name="Russo S."/>
            <person name="Schroeder A.J."/>
            <person name="Shu S.Q."/>
            <person name="Stapleton M."/>
            <person name="Yamada C."/>
            <person name="Ashburner M."/>
            <person name="Gelbart W.M."/>
            <person name="Rubin G.M."/>
            <person name="Lewis S.E."/>
        </authorList>
    </citation>
    <scope>GENOME REANNOTATION</scope>
    <source>
        <strain evidence="10">Berkeley</strain>
    </source>
</reference>
<reference evidence="8" key="3">
    <citation type="journal article" date="2002" name="Genome Biol.">
        <title>A Drosophila full-length cDNA resource.</title>
        <authorList>
            <person name="Stapleton M."/>
            <person name="Carlson J.W."/>
            <person name="Brokstein P."/>
            <person name="Yu C."/>
            <person name="Champe M."/>
            <person name="George R.A."/>
            <person name="Guarin H."/>
            <person name="Kronmiller B."/>
            <person name="Pacleb J.M."/>
            <person name="Park S."/>
            <person name="Wan K.H."/>
            <person name="Rubin G.M."/>
            <person name="Celniker S.E."/>
        </authorList>
    </citation>
    <scope>NUCLEOTIDE SEQUENCE [LARGE SCALE MRNA]</scope>
    <source>
        <strain evidence="8">Berkeley</strain>
        <tissue evidence="8">Embryo</tissue>
    </source>
</reference>
<reference evidence="6" key="4">
    <citation type="journal article" date="2016" name="PLoS Genet.">
        <title>Maintenance of stem cell niche integrity by a novel activator of integrin signaling.</title>
        <authorList>
            <person name="Lee J.Y."/>
            <person name="Chen J.Y."/>
            <person name="Shaw J.L."/>
            <person name="Chang K.T."/>
        </authorList>
    </citation>
    <scope>FUNCTION</scope>
    <scope>SUBCELLULAR LOCATION</scope>
    <scope>TISSUE SPECIFICITY</scope>
    <scope>DISRUPTION PHENOTYPE</scope>
    <scope>MUTAGENESIS OF LYS-253 AND ASP-255</scope>
</reference>
<accession>Q9VPQ2</accession>
<protein>
    <recommendedName>
        <fullName evidence="6">DnaJ homolog shv</fullName>
    </recommendedName>
    <alternativeName>
        <fullName evidence="5">Protein shriveled</fullName>
    </alternativeName>
</protein>
<name>DJSHV_DROME</name>
<comment type="function">
    <text evidence="4">Maintains stem cell niche architecture in the testes. Activates an extracellular integrin beta-PS pathway which regulates DE-cadherin (shg) levels in somatic hub cells, and is essential for maintaining the number of germline stem cells and the structure and localization of hub cells.</text>
</comment>
<comment type="subcellular location">
    <subcellularLocation>
        <location evidence="4">Nucleus</location>
    </subcellularLocation>
    <subcellularLocation>
        <location evidence="4">Cell membrane</location>
    </subcellularLocation>
    <subcellularLocation>
        <location evidence="4">Secreted</location>
    </subcellularLocation>
    <text evidence="4">Secreted by somatic cells of the testes. Detected at the cell borders between the hub and germline stem cells, and between the germ and cyst stem cells.</text>
</comment>
<comment type="tissue specificity">
    <text evidence="4">In the testes, detected at low levels in somatic hub cells, cyst stem cells and the apical tip (at protein level). Levels in the testes decrease with age (at protein level). Expressed at low levels in hub cells, cyst stem cells and germline stem cells, and at high levels in spermatocytes and cyst cells.</text>
</comment>
<comment type="disruption phenotype">
    <text evidence="4">Males are sterile and display an age-dependent decrease in testes size resulting from a gradual loss in somatic hub cell structure and a decrease in the number of germline stem cells. Hub cells frequently do not localize to the apical tip and are instead present throughout the testes. The number of hub cells is not affected. Reduced DE-cadherin levels in the hub cells. Absence of integrin clustering and decreased focal adhesion kinase (FAK) phosphorylation at the hub/cyst stem cell interface.</text>
</comment>
<comment type="miscellaneous">
    <text evidence="5">The name 'shriveled' derives from the shrinking testes phenotype of mutants.</text>
</comment>
<feature type="signal peptide" evidence="1">
    <location>
        <begin position="1"/>
        <end position="22"/>
    </location>
</feature>
<feature type="chain" id="PRO_5008180999" description="DnaJ homolog shv" evidence="1">
    <location>
        <begin position="23"/>
        <end position="354"/>
    </location>
</feature>
<feature type="domain" description="J" evidence="2">
    <location>
        <begin position="25"/>
        <end position="90"/>
    </location>
</feature>
<feature type="glycosylation site" description="N-linked (GlcNAc...) asparagine" evidence="3">
    <location>
        <position position="260"/>
    </location>
</feature>
<feature type="glycosylation site" description="N-linked (GlcNAc...) asparagine" evidence="3">
    <location>
        <position position="312"/>
    </location>
</feature>
<feature type="mutagenesis site" description="Loss of activity. Decrease in focal adhesion kinase (FAK) phosphorylation and loss of cell spreading; when associated with V-255." evidence="4">
    <original>K</original>
    <variation>L</variation>
    <location>
        <position position="253"/>
    </location>
</feature>
<feature type="mutagenesis site" description="Loss of activity. Decrease in focal adhesion kinase (FAK) phosphorylation and loss of cell spreading; when associated with L-253." evidence="4">
    <original>D</original>
    <variation>V</variation>
    <location>
        <position position="255"/>
    </location>
</feature>
<keyword id="KW-0130">Cell adhesion</keyword>
<keyword id="KW-1003">Cell membrane</keyword>
<keyword id="KW-0325">Glycoprotein</keyword>
<keyword id="KW-0472">Membrane</keyword>
<keyword id="KW-0539">Nucleus</keyword>
<keyword id="KW-1185">Reference proteome</keyword>
<keyword id="KW-0964">Secreted</keyword>
<keyword id="KW-0732">Signal</keyword>
<proteinExistence type="evidence at protein level"/>